<reference evidence="6" key="1">
    <citation type="journal article" date="1977" name="J. Biochem.">
        <title>Pea histones H2A and H2B. Variable and conserved regions in the sequences.</title>
        <authorList>
            <person name="Hayashi H."/>
            <person name="Iwai K."/>
            <person name="Johnson J.D."/>
            <person name="Bonner J."/>
        </authorList>
    </citation>
    <scope>PROTEIN SEQUENCE OF 2-120</scope>
    <scope>VARIANTS ASP-29 AND ILE-106</scope>
</reference>
<sequence>MAEPAKKKPKKLPKKDKGQKDIKRKKKESYTVKIYIFKVLKQVHPDIGISSKAMGIMNSFINDIFEKLASEASRLARYNKKSTITPREIQTAVRLLLPGEVAKHKVSEATKAVTKFTSGA</sequence>
<organism>
    <name type="scientific">Pisum sativum</name>
    <name type="common">Garden pea</name>
    <name type="synonym">Lathyrus oleraceus</name>
    <dbReference type="NCBI Taxonomy" id="3888"/>
    <lineage>
        <taxon>Eukaryota</taxon>
        <taxon>Viridiplantae</taxon>
        <taxon>Streptophyta</taxon>
        <taxon>Embryophyta</taxon>
        <taxon>Tracheophyta</taxon>
        <taxon>Spermatophyta</taxon>
        <taxon>Magnoliopsida</taxon>
        <taxon>eudicotyledons</taxon>
        <taxon>Gunneridae</taxon>
        <taxon>Pentapetalae</taxon>
        <taxon>rosids</taxon>
        <taxon>fabids</taxon>
        <taxon>Fabales</taxon>
        <taxon>Fabaceae</taxon>
        <taxon>Papilionoideae</taxon>
        <taxon>50 kb inversion clade</taxon>
        <taxon>NPAAA clade</taxon>
        <taxon>Hologalegina</taxon>
        <taxon>IRL clade</taxon>
        <taxon>Fabeae</taxon>
        <taxon>Pisum</taxon>
    </lineage>
</organism>
<comment type="function">
    <text>Core component of nucleosome. Nucleosomes wrap and compact DNA into chromatin, limiting DNA accessibility to the cellular machineries which require DNA as a template. Histones thereby play a central role in transcription regulation, DNA repair, DNA replication and chromosomal stability. DNA accessibility is regulated via a complex set of post-translational modifications of histones, also called histone code, and nucleosome remodeling.</text>
</comment>
<comment type="subunit">
    <text>The nucleosome is a histone octamer containing two molecules each of H2A, H2B, H3 and H4 assembled in one H3-H4 heterotetramer and two H2A-H2B heterodimers. The octamer wraps approximately 147 bp of DNA.</text>
</comment>
<comment type="subcellular location">
    <subcellularLocation>
        <location>Nucleus</location>
    </subcellularLocation>
    <subcellularLocation>
        <location>Chromosome</location>
    </subcellularLocation>
</comment>
<comment type="PTM">
    <text evidence="1">Can be acetylated to form H2BK6ac, H2BK33ac and H2BK34ac.</text>
</comment>
<comment type="PTM">
    <text evidence="1">Monoubiquitinated to form H2BK143ub1; may give a specific tag for epigenetic transcriptional activation.</text>
</comment>
<comment type="similarity">
    <text evidence="3">Belongs to the histone H2B family.</text>
</comment>
<comment type="caution">
    <text evidence="6">To ensure consistency between histone entries, we follow the 'Brno' nomenclature for histone modifications, with positions referring to those used in the literature for the 'closest' model organism. Due to slight variations in histone sequences between organisms and to the presence of initiator methionine in UniProtKB/Swiss-Prot sequences, the actual positions of modified amino acids in the sequence generally differ. In this entry the following conventions are used: H2BK6ac = acetylated Lys-7; H2BK33ac = acetylated Lys-10; H2BK34ac = acetylated Lys-11; H2BK143ub1 = monoubiquitinated Lys-115.</text>
</comment>
<proteinExistence type="evidence at protein level"/>
<protein>
    <recommendedName>
        <fullName>Histone H2B</fullName>
    </recommendedName>
</protein>
<dbReference type="SMR" id="Q99285"/>
<dbReference type="GO" id="GO:0000786">
    <property type="term" value="C:nucleosome"/>
    <property type="evidence" value="ECO:0007669"/>
    <property type="project" value="UniProtKB-KW"/>
</dbReference>
<dbReference type="GO" id="GO:0005634">
    <property type="term" value="C:nucleus"/>
    <property type="evidence" value="ECO:0007669"/>
    <property type="project" value="UniProtKB-SubCell"/>
</dbReference>
<dbReference type="GO" id="GO:0003677">
    <property type="term" value="F:DNA binding"/>
    <property type="evidence" value="ECO:0007669"/>
    <property type="project" value="UniProtKB-KW"/>
</dbReference>
<dbReference type="GO" id="GO:0046982">
    <property type="term" value="F:protein heterodimerization activity"/>
    <property type="evidence" value="ECO:0007669"/>
    <property type="project" value="InterPro"/>
</dbReference>
<dbReference type="GO" id="GO:0030527">
    <property type="term" value="F:structural constituent of chromatin"/>
    <property type="evidence" value="ECO:0007669"/>
    <property type="project" value="InterPro"/>
</dbReference>
<dbReference type="GO" id="GO:0030261">
    <property type="term" value="P:chromosome condensation"/>
    <property type="evidence" value="ECO:0007669"/>
    <property type="project" value="UniProtKB-KW"/>
</dbReference>
<dbReference type="CDD" id="cd22910">
    <property type="entry name" value="HFD_H2B"/>
    <property type="match status" value="1"/>
</dbReference>
<dbReference type="FunFam" id="1.10.20.10:FF:000016">
    <property type="entry name" value="Histone H2B"/>
    <property type="match status" value="1"/>
</dbReference>
<dbReference type="Gene3D" id="1.10.20.10">
    <property type="entry name" value="Histone, subunit A"/>
    <property type="match status" value="1"/>
</dbReference>
<dbReference type="InterPro" id="IPR009072">
    <property type="entry name" value="Histone-fold"/>
</dbReference>
<dbReference type="InterPro" id="IPR007125">
    <property type="entry name" value="Histone_H2A/H2B/H3"/>
</dbReference>
<dbReference type="InterPro" id="IPR000558">
    <property type="entry name" value="Histone_H2B"/>
</dbReference>
<dbReference type="PANTHER" id="PTHR23428">
    <property type="entry name" value="HISTONE H2B"/>
    <property type="match status" value="1"/>
</dbReference>
<dbReference type="Pfam" id="PF00125">
    <property type="entry name" value="Histone"/>
    <property type="match status" value="1"/>
</dbReference>
<dbReference type="PRINTS" id="PR00621">
    <property type="entry name" value="HISTONEH2B"/>
</dbReference>
<dbReference type="SMART" id="SM00427">
    <property type="entry name" value="H2B"/>
    <property type="match status" value="1"/>
</dbReference>
<dbReference type="SUPFAM" id="SSF47113">
    <property type="entry name" value="Histone-fold"/>
    <property type="match status" value="1"/>
</dbReference>
<name>H2B_PEA</name>
<evidence type="ECO:0000250" key="1"/>
<evidence type="ECO:0000250" key="2">
    <source>
        <dbReference type="UniProtKB" id="O49118"/>
    </source>
</evidence>
<evidence type="ECO:0000255" key="3"/>
<evidence type="ECO:0000256" key="4">
    <source>
        <dbReference type="SAM" id="MobiDB-lite"/>
    </source>
</evidence>
<evidence type="ECO:0000269" key="5">
    <source>
    </source>
</evidence>
<evidence type="ECO:0000305" key="6"/>
<accession>Q99285</accession>
<keyword id="KW-0007">Acetylation</keyword>
<keyword id="KW-0158">Chromosome</keyword>
<keyword id="KW-0903">Direct protein sequencing</keyword>
<keyword id="KW-0226">DNA condensation</keyword>
<keyword id="KW-0238">DNA-binding</keyword>
<keyword id="KW-1017">Isopeptide bond</keyword>
<keyword id="KW-0544">Nucleosome core</keyword>
<keyword id="KW-0539">Nucleus</keyword>
<keyword id="KW-0832">Ubl conjugation</keyword>
<gene>
    <name evidence="2" type="primary">HIS2B</name>
</gene>
<feature type="initiator methionine" description="Removed" evidence="5">
    <location>
        <position position="1"/>
    </location>
</feature>
<feature type="chain" id="PRO_0000071920" description="Histone H2B">
    <location>
        <begin position="2"/>
        <end position="120"/>
    </location>
</feature>
<feature type="region of interest" description="Disordered" evidence="4">
    <location>
        <begin position="1"/>
        <end position="26"/>
    </location>
</feature>
<feature type="modified residue" description="Blocked amino end (Ala)">
    <location>
        <position position="2"/>
    </location>
</feature>
<feature type="modified residue" description="N6-acetyllysine" evidence="1">
    <location>
        <position position="7"/>
    </location>
</feature>
<feature type="modified residue" description="N6-acetyllysine" evidence="1">
    <location>
        <position position="10"/>
    </location>
</feature>
<feature type="modified residue" description="N6-acetyllysine" evidence="1">
    <location>
        <position position="11"/>
    </location>
</feature>
<feature type="cross-link" description="Glycyl lysine isopeptide (Lys-Gly) (interchain with G-Cter in ubiquitin)" evidence="1">
    <location>
        <position position="115"/>
    </location>
</feature>
<feature type="sequence variant" evidence="5">
    <original>S</original>
    <variation>D</variation>
    <location>
        <position position="29"/>
    </location>
</feature>
<feature type="sequence variant" evidence="5">
    <original>V</original>
    <variation>I</variation>
    <location>
        <position position="106"/>
    </location>
</feature>
<feature type="non-consecutive residues" evidence="6">
    <location>
        <begin position="6"/>
        <end position="7"/>
    </location>
</feature>
<feature type="non-consecutive residues" evidence="6">
    <location>
        <begin position="10"/>
        <end position="11"/>
    </location>
</feature>
<feature type="non-consecutive residues" evidence="6">
    <location>
        <begin position="14"/>
        <end position="15"/>
    </location>
</feature>
<feature type="non-consecutive residues" evidence="6">
    <location>
        <begin position="17"/>
        <end position="18"/>
    </location>
</feature>
<feature type="non-consecutive residues" evidence="6">
    <location>
        <begin position="20"/>
        <end position="21"/>
    </location>
</feature>
<feature type="non-consecutive residues" evidence="6">
    <location>
        <begin position="22"/>
        <end position="23"/>
    </location>
</feature>
<feature type="non-consecutive residues" evidence="6">
    <location>
        <begin position="24"/>
        <end position="25"/>
    </location>
</feature>
<feature type="non-consecutive residues" evidence="6">
    <location>
        <begin position="26"/>
        <end position="27"/>
    </location>
</feature>